<reference key="1">
    <citation type="journal article" date="2008" name="Genomics">
        <title>Evolution in the laboratory: the genome of Halobacterium salinarum strain R1 compared to that of strain NRC-1.</title>
        <authorList>
            <person name="Pfeiffer F."/>
            <person name="Schuster S.C."/>
            <person name="Broicher A."/>
            <person name="Falb M."/>
            <person name="Palm P."/>
            <person name="Rodewald K."/>
            <person name="Ruepp A."/>
            <person name="Soppa J."/>
            <person name="Tittor J."/>
            <person name="Oesterhelt D."/>
        </authorList>
    </citation>
    <scope>NUCLEOTIDE SEQUENCE [LARGE SCALE GENOMIC DNA]</scope>
    <source>
        <strain>ATCC 29341 / DSM 671 / R1</strain>
    </source>
</reference>
<comment type="function">
    <text evidence="1">Involved in DNA repair and in homologous recombination. May regulate the cleavage reactions of the branch-structured DNA. Has a very weak ATPase activity that is not stimulated by DNA. Binds DNA but does not promote DNA strands exchange.</text>
</comment>
<comment type="similarity">
    <text evidence="1">Belongs to the eukaryotic RecA-like protein family. RadB subfamily.</text>
</comment>
<evidence type="ECO:0000255" key="1">
    <source>
        <dbReference type="HAMAP-Rule" id="MF_00350"/>
    </source>
</evidence>
<sequence length="236" mass="25065">MREDDTHLPTGCGALDELLGGGVERGTVTQLYGPPAAGKTNVALTTAVTTAAAGGLAVYVDTEGLSLARFQQLLEARATDPEAASANVIVSDAHDFDEQAQAVRDTADFADRADLIVVDSVTGFYRLARGGDDTTGDALRQVADQITHLLSLARKHDLAVVVTNQVFTDVDNDSDRARPLGGHTLAHWTGTVLRLDRFRGGTRRATLEKHRAKPDGEHAQFQITDGGIDAASADDY</sequence>
<name>RADB_HALS3</name>
<accession>B0R636</accession>
<feature type="chain" id="PRO_1000120515" description="DNA repair and recombination protein RadB">
    <location>
        <begin position="1"/>
        <end position="236"/>
    </location>
</feature>
<proteinExistence type="inferred from homology"/>
<protein>
    <recommendedName>
        <fullName evidence="1">DNA repair and recombination protein RadB</fullName>
    </recommendedName>
</protein>
<keyword id="KW-0067">ATP-binding</keyword>
<keyword id="KW-0227">DNA damage</keyword>
<keyword id="KW-0233">DNA recombination</keyword>
<keyword id="KW-0238">DNA-binding</keyword>
<keyword id="KW-0547">Nucleotide-binding</keyword>
<dbReference type="EMBL" id="AM774415">
    <property type="protein sequence ID" value="CAP14205.1"/>
    <property type="molecule type" value="Genomic_DNA"/>
</dbReference>
<dbReference type="RefSeq" id="WP_010903214.1">
    <property type="nucleotide sequence ID" value="NC_010364.1"/>
</dbReference>
<dbReference type="SMR" id="B0R636"/>
<dbReference type="EnsemblBacteria" id="CAP14205">
    <property type="protein sequence ID" value="CAP14205"/>
    <property type="gene ID" value="OE_3352R"/>
</dbReference>
<dbReference type="GeneID" id="89349916"/>
<dbReference type="KEGG" id="hsl:OE_3352R"/>
<dbReference type="HOGENOM" id="CLU_041732_2_0_2"/>
<dbReference type="PhylomeDB" id="B0R636"/>
<dbReference type="Proteomes" id="UP000001321">
    <property type="component" value="Chromosome"/>
</dbReference>
<dbReference type="GO" id="GO:0005524">
    <property type="term" value="F:ATP binding"/>
    <property type="evidence" value="ECO:0007669"/>
    <property type="project" value="UniProtKB-UniRule"/>
</dbReference>
<dbReference type="GO" id="GO:0016887">
    <property type="term" value="F:ATP hydrolysis activity"/>
    <property type="evidence" value="ECO:0007669"/>
    <property type="project" value="InterPro"/>
</dbReference>
<dbReference type="GO" id="GO:0140664">
    <property type="term" value="F:ATP-dependent DNA damage sensor activity"/>
    <property type="evidence" value="ECO:0007669"/>
    <property type="project" value="InterPro"/>
</dbReference>
<dbReference type="GO" id="GO:0003684">
    <property type="term" value="F:damaged DNA binding"/>
    <property type="evidence" value="ECO:0007669"/>
    <property type="project" value="UniProtKB-UniRule"/>
</dbReference>
<dbReference type="GO" id="GO:0006310">
    <property type="term" value="P:DNA recombination"/>
    <property type="evidence" value="ECO:0007669"/>
    <property type="project" value="UniProtKB-UniRule"/>
</dbReference>
<dbReference type="GO" id="GO:0006281">
    <property type="term" value="P:DNA repair"/>
    <property type="evidence" value="ECO:0007669"/>
    <property type="project" value="UniProtKB-UniRule"/>
</dbReference>
<dbReference type="Gene3D" id="3.40.50.300">
    <property type="entry name" value="P-loop containing nucleotide triphosphate hydrolases"/>
    <property type="match status" value="1"/>
</dbReference>
<dbReference type="HAMAP" id="MF_00350">
    <property type="entry name" value="RadB"/>
    <property type="match status" value="1"/>
</dbReference>
<dbReference type="InterPro" id="IPR003593">
    <property type="entry name" value="AAA+_ATPase"/>
</dbReference>
<dbReference type="InterPro" id="IPR013632">
    <property type="entry name" value="DNA_recomb/repair_Rad51_C"/>
</dbReference>
<dbReference type="InterPro" id="IPR011939">
    <property type="entry name" value="DNA_repair_and_recomb_RadB"/>
</dbReference>
<dbReference type="InterPro" id="IPR027417">
    <property type="entry name" value="P-loop_NTPase"/>
</dbReference>
<dbReference type="InterPro" id="IPR020588">
    <property type="entry name" value="RecA_ATP-bd"/>
</dbReference>
<dbReference type="NCBIfam" id="NF006861">
    <property type="entry name" value="PRK09361.1-1"/>
    <property type="match status" value="1"/>
</dbReference>
<dbReference type="NCBIfam" id="TIGR02237">
    <property type="entry name" value="recomb_radB"/>
    <property type="match status" value="1"/>
</dbReference>
<dbReference type="PANTHER" id="PTHR22942:SF47">
    <property type="entry name" value="DNA REPAIR AND RECOMBINATION PROTEIN RADB"/>
    <property type="match status" value="1"/>
</dbReference>
<dbReference type="PANTHER" id="PTHR22942">
    <property type="entry name" value="RECA/RAD51/RADA DNA STRAND-PAIRING FAMILY MEMBER"/>
    <property type="match status" value="1"/>
</dbReference>
<dbReference type="Pfam" id="PF08423">
    <property type="entry name" value="Rad51"/>
    <property type="match status" value="1"/>
</dbReference>
<dbReference type="PIRSF" id="PIRSF003336">
    <property type="entry name" value="RadB"/>
    <property type="match status" value="1"/>
</dbReference>
<dbReference type="PRINTS" id="PR01874">
    <property type="entry name" value="DNAREPAIRADA"/>
</dbReference>
<dbReference type="SMART" id="SM00382">
    <property type="entry name" value="AAA"/>
    <property type="match status" value="1"/>
</dbReference>
<dbReference type="SUPFAM" id="SSF52540">
    <property type="entry name" value="P-loop containing nucleoside triphosphate hydrolases"/>
    <property type="match status" value="1"/>
</dbReference>
<dbReference type="PROSITE" id="PS50162">
    <property type="entry name" value="RECA_2"/>
    <property type="match status" value="1"/>
</dbReference>
<organism>
    <name type="scientific">Halobacterium salinarum (strain ATCC 29341 / DSM 671 / R1)</name>
    <dbReference type="NCBI Taxonomy" id="478009"/>
    <lineage>
        <taxon>Archaea</taxon>
        <taxon>Methanobacteriati</taxon>
        <taxon>Methanobacteriota</taxon>
        <taxon>Stenosarchaea group</taxon>
        <taxon>Halobacteria</taxon>
        <taxon>Halobacteriales</taxon>
        <taxon>Halobacteriaceae</taxon>
        <taxon>Halobacterium</taxon>
        <taxon>Halobacterium salinarum NRC-34001</taxon>
    </lineage>
</organism>
<gene>
    <name evidence="1" type="primary">radB</name>
    <name type="ordered locus">OE_3352R</name>
</gene>